<keyword id="KW-0349">Heme</keyword>
<keyword id="KW-0408">Iron</keyword>
<keyword id="KW-0479">Metal-binding</keyword>
<keyword id="KW-0503">Monooxygenase</keyword>
<keyword id="KW-0560">Oxidoreductase</keyword>
<keyword id="KW-1185">Reference proteome</keyword>
<evidence type="ECO:0000250" key="1"/>
<evidence type="ECO:0000305" key="2"/>
<proteinExistence type="inferred from homology"/>
<dbReference type="EC" id="1.14.-.-"/>
<dbReference type="EMBL" id="Z48717">
    <property type="protein sequence ID" value="CAA88605.1"/>
    <property type="molecule type" value="Genomic_DNA"/>
</dbReference>
<dbReference type="PIR" id="T24779">
    <property type="entry name" value="T24779"/>
</dbReference>
<dbReference type="RefSeq" id="NP_496113.1">
    <property type="nucleotide sequence ID" value="NM_063712.4"/>
</dbReference>
<dbReference type="SMR" id="Q27515"/>
<dbReference type="FunCoup" id="Q27515">
    <property type="interactions" value="117"/>
</dbReference>
<dbReference type="STRING" id="6239.T10B9.3.1"/>
<dbReference type="PaxDb" id="6239-T10B9.3"/>
<dbReference type="PeptideAtlas" id="Q27515"/>
<dbReference type="EnsemblMetazoa" id="T10B9.3.1">
    <property type="protein sequence ID" value="T10B9.3.1"/>
    <property type="gene ID" value="WBGene00011673"/>
</dbReference>
<dbReference type="GeneID" id="188357"/>
<dbReference type="KEGG" id="cel:CELE_T10B9.3"/>
<dbReference type="UCSC" id="T10B9.3">
    <property type="organism name" value="c. elegans"/>
</dbReference>
<dbReference type="AGR" id="WB:WBGene00011673"/>
<dbReference type="CTD" id="188357"/>
<dbReference type="WormBase" id="T10B9.3">
    <property type="protein sequence ID" value="CE01657"/>
    <property type="gene ID" value="WBGene00011673"/>
    <property type="gene designation" value="cyp-13A6"/>
</dbReference>
<dbReference type="eggNOG" id="KOG0158">
    <property type="taxonomic scope" value="Eukaryota"/>
</dbReference>
<dbReference type="GeneTree" id="ENSGT00970000195979"/>
<dbReference type="HOGENOM" id="CLU_001570_5_2_1"/>
<dbReference type="InParanoid" id="Q27515"/>
<dbReference type="OMA" id="ANTRKCM"/>
<dbReference type="OrthoDB" id="2789670at2759"/>
<dbReference type="PhylomeDB" id="Q27515"/>
<dbReference type="PRO" id="PR:Q27515"/>
<dbReference type="Proteomes" id="UP000001940">
    <property type="component" value="Chromosome II"/>
</dbReference>
<dbReference type="Bgee" id="WBGene00011673">
    <property type="expression patterns" value="Expressed in larva and 2 other cell types or tissues"/>
</dbReference>
<dbReference type="GO" id="GO:0020037">
    <property type="term" value="F:heme binding"/>
    <property type="evidence" value="ECO:0007669"/>
    <property type="project" value="InterPro"/>
</dbReference>
<dbReference type="GO" id="GO:0005506">
    <property type="term" value="F:iron ion binding"/>
    <property type="evidence" value="ECO:0007669"/>
    <property type="project" value="InterPro"/>
</dbReference>
<dbReference type="GO" id="GO:0004497">
    <property type="term" value="F:monooxygenase activity"/>
    <property type="evidence" value="ECO:0007669"/>
    <property type="project" value="UniProtKB-KW"/>
</dbReference>
<dbReference type="GO" id="GO:0016705">
    <property type="term" value="F:oxidoreductase activity, acting on paired donors, with incorporation or reduction of molecular oxygen"/>
    <property type="evidence" value="ECO:0007669"/>
    <property type="project" value="InterPro"/>
</dbReference>
<dbReference type="CDD" id="cd11055">
    <property type="entry name" value="CYP3A-like"/>
    <property type="match status" value="1"/>
</dbReference>
<dbReference type="FunFam" id="1.10.630.10:FF:000182">
    <property type="entry name" value="Cytochrome P450 3A4"/>
    <property type="match status" value="1"/>
</dbReference>
<dbReference type="Gene3D" id="1.10.630.10">
    <property type="entry name" value="Cytochrome P450"/>
    <property type="match status" value="1"/>
</dbReference>
<dbReference type="InterPro" id="IPR001128">
    <property type="entry name" value="Cyt_P450"/>
</dbReference>
<dbReference type="InterPro" id="IPR017972">
    <property type="entry name" value="Cyt_P450_CS"/>
</dbReference>
<dbReference type="InterPro" id="IPR002401">
    <property type="entry name" value="Cyt_P450_E_grp-I"/>
</dbReference>
<dbReference type="InterPro" id="IPR036396">
    <property type="entry name" value="Cyt_P450_sf"/>
</dbReference>
<dbReference type="InterPro" id="IPR050705">
    <property type="entry name" value="Cytochrome_P450_3A"/>
</dbReference>
<dbReference type="PANTHER" id="PTHR24302">
    <property type="entry name" value="CYTOCHROME P450 FAMILY 3"/>
    <property type="match status" value="1"/>
</dbReference>
<dbReference type="PANTHER" id="PTHR24302:SF15">
    <property type="entry name" value="FATTY-ACID PEROXYGENASE"/>
    <property type="match status" value="1"/>
</dbReference>
<dbReference type="Pfam" id="PF00067">
    <property type="entry name" value="p450"/>
    <property type="match status" value="1"/>
</dbReference>
<dbReference type="PRINTS" id="PR00463">
    <property type="entry name" value="EP450I"/>
</dbReference>
<dbReference type="PRINTS" id="PR00385">
    <property type="entry name" value="P450"/>
</dbReference>
<dbReference type="SUPFAM" id="SSF48264">
    <property type="entry name" value="Cytochrome P450"/>
    <property type="match status" value="1"/>
</dbReference>
<dbReference type="PROSITE" id="PS00086">
    <property type="entry name" value="CYTOCHROME_P450"/>
    <property type="match status" value="1"/>
</dbReference>
<protein>
    <recommendedName>
        <fullName>Putative cytochrome P450 CYP13A6</fullName>
        <ecNumber>1.14.-.-</ecNumber>
    </recommendedName>
</protein>
<name>C13A6_CAEEL</name>
<reference key="1">
    <citation type="journal article" date="1998" name="Science">
        <title>Genome sequence of the nematode C. elegans: a platform for investigating biology.</title>
        <authorList>
            <consortium name="The C. elegans sequencing consortium"/>
        </authorList>
    </citation>
    <scope>NUCLEOTIDE SEQUENCE [LARGE SCALE GENOMIC DNA]</scope>
    <source>
        <strain>Bristol N2</strain>
    </source>
</reference>
<feature type="chain" id="PRO_0000052266" description="Putative cytochrome P450 CYP13A6">
    <location>
        <begin position="1"/>
        <end position="518"/>
    </location>
</feature>
<feature type="binding site" description="axial binding residue" evidence="1">
    <location>
        <position position="463"/>
    </location>
    <ligand>
        <name>heme</name>
        <dbReference type="ChEBI" id="CHEBI:30413"/>
    </ligand>
    <ligandPart>
        <name>Fe</name>
        <dbReference type="ChEBI" id="CHEBI:18248"/>
    </ligandPart>
</feature>
<organism>
    <name type="scientific">Caenorhabditis elegans</name>
    <dbReference type="NCBI Taxonomy" id="6239"/>
    <lineage>
        <taxon>Eukaryota</taxon>
        <taxon>Metazoa</taxon>
        <taxon>Ecdysozoa</taxon>
        <taxon>Nematoda</taxon>
        <taxon>Chromadorea</taxon>
        <taxon>Rhabditida</taxon>
        <taxon>Rhabditina</taxon>
        <taxon>Rhabditomorpha</taxon>
        <taxon>Rhabditoidea</taxon>
        <taxon>Rhabditidae</taxon>
        <taxon>Peloderinae</taxon>
        <taxon>Caenorhabditis</taxon>
    </lineage>
</organism>
<gene>
    <name type="primary">cyp-13A6</name>
    <name type="synonym">cyp13a6</name>
    <name type="ORF">T10B9.3</name>
</gene>
<comment type="function">
    <text>Cytochromes P450 are a group of heme-thiolate monooxygenases. They oxidize a variety of structurally unrelated compounds, including steroids, fatty acids, and xenobiotics.</text>
</comment>
<comment type="cofactor">
    <cofactor evidence="1">
        <name>heme</name>
        <dbReference type="ChEBI" id="CHEBI:30413"/>
    </cofactor>
</comment>
<comment type="similarity">
    <text evidence="2">Belongs to the cytochrome P450 family.</text>
</comment>
<accession>Q27515</accession>
<sequence length="518" mass="59445">MIFVLLSAVLLGVFTYSVWIWSYFIRKGIKGPRGFPGIGMLIQTIDHENPPFLKYRDWTKQYGPVYGFTEGPQQTMIISEPEMVNEIFKKQFDNFYGRKLRPIIGDPEKDKRVNIFSTQGKRWKRLRTLSSPSFSNNSLRKVRNSVQECGTEILWNIEQKVRKNEDIDMLIVYQEYTLGVISRIALGQSESNMFKNPLLPKVQAIFNGSWHVFLITGIFPPLAGVFRKMSKMLPASFIPAFKIFDLIEVAVQARIDQRAKDEIKGVEPGEPQDFIDLFLDARVPDVKILSGEANEDFAKSSVVKINKELTFDEIIAQCFVFLAAGFDTTALSLSYATYLLATHPEIQTKLQEEVDRECPDPEIFFDHLSKLKYLECVMKETLRLYPLGTTANTRKCMRETTINGVNFDEGMNIQVDTWTLHHNPRIWGEDVEDFKPERWENGACEHLEHNGSYIPFGSGPRQCIGMRLAQMEQKILLAQILKEYSFRTTKNTQIPVKLVGKLTLSPESVIVKLEPRDS</sequence>